<proteinExistence type="inferred from homology"/>
<gene>
    <name evidence="1" type="primary">ilvC</name>
    <name type="ordered locus">SBO_3785</name>
</gene>
<evidence type="ECO:0000255" key="1">
    <source>
        <dbReference type="HAMAP-Rule" id="MF_00435"/>
    </source>
</evidence>
<evidence type="ECO:0000255" key="2">
    <source>
        <dbReference type="PROSITE-ProRule" id="PRU01197"/>
    </source>
</evidence>
<evidence type="ECO:0000255" key="3">
    <source>
        <dbReference type="PROSITE-ProRule" id="PRU01198"/>
    </source>
</evidence>
<comment type="function">
    <text evidence="1">Involved in the biosynthesis of branched-chain amino acids (BCAA). Catalyzes an alkyl-migration followed by a ketol-acid reduction of (S)-2-acetolactate (S2AL) to yield (R)-2,3-dihydroxy-isovalerate. In the isomerase reaction, S2AL is rearranged via a Mg-dependent methyl migration to produce 3-hydroxy-3-methyl-2-ketobutyrate (HMKB). In the reductase reaction, this 2-ketoacid undergoes a metal-dependent reduction by NADPH to yield (R)-2,3-dihydroxy-isovalerate.</text>
</comment>
<comment type="catalytic activity">
    <reaction evidence="1">
        <text>(2R)-2,3-dihydroxy-3-methylbutanoate + NADP(+) = (2S)-2-acetolactate + NADPH + H(+)</text>
        <dbReference type="Rhea" id="RHEA:22068"/>
        <dbReference type="ChEBI" id="CHEBI:15378"/>
        <dbReference type="ChEBI" id="CHEBI:49072"/>
        <dbReference type="ChEBI" id="CHEBI:57783"/>
        <dbReference type="ChEBI" id="CHEBI:58349"/>
        <dbReference type="ChEBI" id="CHEBI:58476"/>
        <dbReference type="EC" id="1.1.1.86"/>
    </reaction>
</comment>
<comment type="catalytic activity">
    <reaction evidence="1">
        <text>(2R,3R)-2,3-dihydroxy-3-methylpentanoate + NADP(+) = (S)-2-ethyl-2-hydroxy-3-oxobutanoate + NADPH + H(+)</text>
        <dbReference type="Rhea" id="RHEA:13493"/>
        <dbReference type="ChEBI" id="CHEBI:15378"/>
        <dbReference type="ChEBI" id="CHEBI:49256"/>
        <dbReference type="ChEBI" id="CHEBI:49258"/>
        <dbReference type="ChEBI" id="CHEBI:57783"/>
        <dbReference type="ChEBI" id="CHEBI:58349"/>
        <dbReference type="EC" id="1.1.1.86"/>
    </reaction>
</comment>
<comment type="cofactor">
    <cofactor evidence="1">
        <name>Mg(2+)</name>
        <dbReference type="ChEBI" id="CHEBI:18420"/>
    </cofactor>
    <text evidence="1">Binds 2 magnesium ions per subunit.</text>
</comment>
<comment type="pathway">
    <text evidence="1">Amino-acid biosynthesis; L-isoleucine biosynthesis; L-isoleucine from 2-oxobutanoate: step 2/4.</text>
</comment>
<comment type="pathway">
    <text evidence="1">Amino-acid biosynthesis; L-valine biosynthesis; L-valine from pyruvate: step 2/4.</text>
</comment>
<comment type="similarity">
    <text evidence="1">Belongs to the ketol-acid reductoisomerase family.</text>
</comment>
<feature type="chain" id="PRO_0000226199" description="Ketol-acid reductoisomerase (NADP(+))">
    <location>
        <begin position="1"/>
        <end position="491"/>
    </location>
</feature>
<feature type="domain" description="KARI N-terminal Rossmann" evidence="2">
    <location>
        <begin position="15"/>
        <end position="208"/>
    </location>
</feature>
<feature type="domain" description="KARI C-terminal knotted 1" evidence="3">
    <location>
        <begin position="209"/>
        <end position="344"/>
    </location>
</feature>
<feature type="domain" description="KARI C-terminal knotted 2" evidence="3">
    <location>
        <begin position="345"/>
        <end position="484"/>
    </location>
</feature>
<feature type="active site" evidence="1">
    <location>
        <position position="132"/>
    </location>
</feature>
<feature type="binding site" evidence="1">
    <location>
        <begin position="45"/>
        <end position="48"/>
    </location>
    <ligand>
        <name>NADP(+)</name>
        <dbReference type="ChEBI" id="CHEBI:58349"/>
    </ligand>
</feature>
<feature type="binding site" evidence="1">
    <location>
        <position position="68"/>
    </location>
    <ligand>
        <name>NADP(+)</name>
        <dbReference type="ChEBI" id="CHEBI:58349"/>
    </ligand>
</feature>
<feature type="binding site" evidence="1">
    <location>
        <position position="76"/>
    </location>
    <ligand>
        <name>NADP(+)</name>
        <dbReference type="ChEBI" id="CHEBI:58349"/>
    </ligand>
</feature>
<feature type="binding site" evidence="1">
    <location>
        <position position="78"/>
    </location>
    <ligand>
        <name>NADP(+)</name>
        <dbReference type="ChEBI" id="CHEBI:58349"/>
    </ligand>
</feature>
<feature type="binding site" evidence="1">
    <location>
        <begin position="108"/>
        <end position="110"/>
    </location>
    <ligand>
        <name>NADP(+)</name>
        <dbReference type="ChEBI" id="CHEBI:58349"/>
    </ligand>
</feature>
<feature type="binding site" evidence="1">
    <location>
        <position position="158"/>
    </location>
    <ligand>
        <name>NADP(+)</name>
        <dbReference type="ChEBI" id="CHEBI:58349"/>
    </ligand>
</feature>
<feature type="binding site" evidence="1">
    <location>
        <position position="217"/>
    </location>
    <ligand>
        <name>Mg(2+)</name>
        <dbReference type="ChEBI" id="CHEBI:18420"/>
        <label>1</label>
    </ligand>
</feature>
<feature type="binding site" evidence="1">
    <location>
        <position position="217"/>
    </location>
    <ligand>
        <name>Mg(2+)</name>
        <dbReference type="ChEBI" id="CHEBI:18420"/>
        <label>2</label>
    </ligand>
</feature>
<feature type="binding site" evidence="1">
    <location>
        <position position="221"/>
    </location>
    <ligand>
        <name>Mg(2+)</name>
        <dbReference type="ChEBI" id="CHEBI:18420"/>
        <label>1</label>
    </ligand>
</feature>
<feature type="binding site" evidence="1">
    <location>
        <position position="389"/>
    </location>
    <ligand>
        <name>Mg(2+)</name>
        <dbReference type="ChEBI" id="CHEBI:18420"/>
        <label>2</label>
    </ligand>
</feature>
<feature type="binding site" evidence="1">
    <location>
        <position position="393"/>
    </location>
    <ligand>
        <name>Mg(2+)</name>
        <dbReference type="ChEBI" id="CHEBI:18420"/>
        <label>2</label>
    </ligand>
</feature>
<feature type="binding site" evidence="1">
    <location>
        <position position="414"/>
    </location>
    <ligand>
        <name>substrate</name>
    </ligand>
</feature>
<reference key="1">
    <citation type="journal article" date="2005" name="Nucleic Acids Res.">
        <title>Genome dynamics and diversity of Shigella species, the etiologic agents of bacillary dysentery.</title>
        <authorList>
            <person name="Yang F."/>
            <person name="Yang J."/>
            <person name="Zhang X."/>
            <person name="Chen L."/>
            <person name="Jiang Y."/>
            <person name="Yan Y."/>
            <person name="Tang X."/>
            <person name="Wang J."/>
            <person name="Xiong Z."/>
            <person name="Dong J."/>
            <person name="Xue Y."/>
            <person name="Zhu Y."/>
            <person name="Xu X."/>
            <person name="Sun L."/>
            <person name="Chen S."/>
            <person name="Nie H."/>
            <person name="Peng J."/>
            <person name="Xu J."/>
            <person name="Wang Y."/>
            <person name="Yuan Z."/>
            <person name="Wen Y."/>
            <person name="Yao Z."/>
            <person name="Shen Y."/>
            <person name="Qiang B."/>
            <person name="Hou Y."/>
            <person name="Yu J."/>
            <person name="Jin Q."/>
        </authorList>
    </citation>
    <scope>NUCLEOTIDE SEQUENCE [LARGE SCALE GENOMIC DNA]</scope>
    <source>
        <strain>Sb227</strain>
    </source>
</reference>
<organism>
    <name type="scientific">Shigella boydii serotype 4 (strain Sb227)</name>
    <dbReference type="NCBI Taxonomy" id="300268"/>
    <lineage>
        <taxon>Bacteria</taxon>
        <taxon>Pseudomonadati</taxon>
        <taxon>Pseudomonadota</taxon>
        <taxon>Gammaproteobacteria</taxon>
        <taxon>Enterobacterales</taxon>
        <taxon>Enterobacteriaceae</taxon>
        <taxon>Shigella</taxon>
    </lineage>
</organism>
<protein>
    <recommendedName>
        <fullName evidence="1">Ketol-acid reductoisomerase (NADP(+))</fullName>
        <shortName evidence="1">KARI</shortName>
        <ecNumber evidence="1">1.1.1.86</ecNumber>
    </recommendedName>
    <alternativeName>
        <fullName evidence="1">Acetohydroxy-acid isomeroreductase</fullName>
        <shortName evidence="1">AHIR</shortName>
    </alternativeName>
    <alternativeName>
        <fullName evidence="1">Alpha-keto-beta-hydroxylacyl reductoisomerase</fullName>
    </alternativeName>
    <alternativeName>
        <fullName evidence="1">Ketol-acid reductoisomerase type 2</fullName>
    </alternativeName>
    <alternativeName>
        <fullName evidence="1">Ketol-acid reductoisomerase type II</fullName>
    </alternativeName>
</protein>
<sequence>MANYFNTLNLRQQLAQLGKCRFMGRDEFADGASYLQGKKVVIVGCGAQGLNQGLNMRDSGLDISYALRKEAIAEKRASWRKATENGFKVGTYEELIPQADLVVNLTPDKQHSDVVRTVQPLMKDGAALGYSHGFNIVEVGEQIRKDITVVMVAPKCPGTEVREEYKRGFGVPTLIAVHPENDPKGEGMAIAKAWAAATGGHRAGVLESSFVAEVKSDLMGEQTILCGMLQAGSLLCFDKLVEEGTDPAYAEKLIQFGWETITEALKQGGITLMMDRLSNPAKLRAYALSEQLKEIMAPLFQKHMDDIISGEFSSGMMADWANDDKKLLTWREETGKTAFETAPQYEGKIGEQEYFDKGVLMIAMVKAGVELAFETMVDSGIIEESAYYESLHELPLIANTIARKRLYEMNVVISDTAEYGNYLFSYACVPLLKPFMAELQPGDLGKAIPEGAVDNAQLRDVNEAIRCHAIEQVGKKLRGYMTDMKRIAVAG</sequence>
<dbReference type="EC" id="1.1.1.86" evidence="1"/>
<dbReference type="EMBL" id="CP000036">
    <property type="protein sequence ID" value="ABB68248.1"/>
    <property type="molecule type" value="Genomic_DNA"/>
</dbReference>
<dbReference type="RefSeq" id="WP_001295253.1">
    <property type="nucleotide sequence ID" value="NC_007613.1"/>
</dbReference>
<dbReference type="SMR" id="Q31UL0"/>
<dbReference type="GeneID" id="93778171"/>
<dbReference type="KEGG" id="sbo:SBO_3785"/>
<dbReference type="HOGENOM" id="CLU_551905_0_0_6"/>
<dbReference type="UniPathway" id="UPA00047">
    <property type="reaction ID" value="UER00056"/>
</dbReference>
<dbReference type="UniPathway" id="UPA00049">
    <property type="reaction ID" value="UER00060"/>
</dbReference>
<dbReference type="Proteomes" id="UP000007067">
    <property type="component" value="Chromosome"/>
</dbReference>
<dbReference type="GO" id="GO:0005829">
    <property type="term" value="C:cytosol"/>
    <property type="evidence" value="ECO:0007669"/>
    <property type="project" value="TreeGrafter"/>
</dbReference>
<dbReference type="GO" id="GO:0004455">
    <property type="term" value="F:ketol-acid reductoisomerase activity"/>
    <property type="evidence" value="ECO:0007669"/>
    <property type="project" value="UniProtKB-UniRule"/>
</dbReference>
<dbReference type="GO" id="GO:0000287">
    <property type="term" value="F:magnesium ion binding"/>
    <property type="evidence" value="ECO:0007669"/>
    <property type="project" value="UniProtKB-UniRule"/>
</dbReference>
<dbReference type="GO" id="GO:0009097">
    <property type="term" value="P:isoleucine biosynthetic process"/>
    <property type="evidence" value="ECO:0007669"/>
    <property type="project" value="UniProtKB-UniRule"/>
</dbReference>
<dbReference type="GO" id="GO:0009099">
    <property type="term" value="P:L-valine biosynthetic process"/>
    <property type="evidence" value="ECO:0007669"/>
    <property type="project" value="UniProtKB-UniRule"/>
</dbReference>
<dbReference type="FunFam" id="1.10.1040.10:FF:000007">
    <property type="entry name" value="Ketol-acid reductoisomerase (NADP(+))"/>
    <property type="match status" value="1"/>
</dbReference>
<dbReference type="FunFam" id="3.40.50.720:FF:000043">
    <property type="entry name" value="Ketol-acid reductoisomerase (NADP(+))"/>
    <property type="match status" value="1"/>
</dbReference>
<dbReference type="Gene3D" id="1.10.1040.10">
    <property type="entry name" value="N-(1-d-carboxylethyl)-l-norvaline Dehydrogenase, domain 2"/>
    <property type="match status" value="1"/>
</dbReference>
<dbReference type="Gene3D" id="3.40.50.720">
    <property type="entry name" value="NAD(P)-binding Rossmann-like Domain"/>
    <property type="match status" value="1"/>
</dbReference>
<dbReference type="HAMAP" id="MF_00435">
    <property type="entry name" value="IlvC"/>
    <property type="match status" value="1"/>
</dbReference>
<dbReference type="InterPro" id="IPR008927">
    <property type="entry name" value="6-PGluconate_DH-like_C_sf"/>
</dbReference>
<dbReference type="InterPro" id="IPR013328">
    <property type="entry name" value="6PGD_dom2"/>
</dbReference>
<dbReference type="InterPro" id="IPR013023">
    <property type="entry name" value="KARI"/>
</dbReference>
<dbReference type="InterPro" id="IPR000506">
    <property type="entry name" value="KARI_C"/>
</dbReference>
<dbReference type="InterPro" id="IPR013116">
    <property type="entry name" value="KARI_N"/>
</dbReference>
<dbReference type="InterPro" id="IPR036291">
    <property type="entry name" value="NAD(P)-bd_dom_sf"/>
</dbReference>
<dbReference type="NCBIfam" id="TIGR00465">
    <property type="entry name" value="ilvC"/>
    <property type="match status" value="1"/>
</dbReference>
<dbReference type="NCBIfam" id="NF003557">
    <property type="entry name" value="PRK05225.1"/>
    <property type="match status" value="1"/>
</dbReference>
<dbReference type="PANTHER" id="PTHR21371">
    <property type="entry name" value="KETOL-ACID REDUCTOISOMERASE, MITOCHONDRIAL"/>
    <property type="match status" value="1"/>
</dbReference>
<dbReference type="PANTHER" id="PTHR21371:SF1">
    <property type="entry name" value="KETOL-ACID REDUCTOISOMERASE, MITOCHONDRIAL"/>
    <property type="match status" value="1"/>
</dbReference>
<dbReference type="Pfam" id="PF01450">
    <property type="entry name" value="KARI_C"/>
    <property type="match status" value="2"/>
</dbReference>
<dbReference type="Pfam" id="PF07991">
    <property type="entry name" value="KARI_N"/>
    <property type="match status" value="1"/>
</dbReference>
<dbReference type="SUPFAM" id="SSF48179">
    <property type="entry name" value="6-phosphogluconate dehydrogenase C-terminal domain-like"/>
    <property type="match status" value="2"/>
</dbReference>
<dbReference type="SUPFAM" id="SSF51735">
    <property type="entry name" value="NAD(P)-binding Rossmann-fold domains"/>
    <property type="match status" value="1"/>
</dbReference>
<dbReference type="PROSITE" id="PS51851">
    <property type="entry name" value="KARI_C"/>
    <property type="match status" value="2"/>
</dbReference>
<dbReference type="PROSITE" id="PS51850">
    <property type="entry name" value="KARI_N"/>
    <property type="match status" value="1"/>
</dbReference>
<name>ILVC_SHIBS</name>
<accession>Q31UL0</accession>
<keyword id="KW-0028">Amino-acid biosynthesis</keyword>
<keyword id="KW-0100">Branched-chain amino acid biosynthesis</keyword>
<keyword id="KW-0460">Magnesium</keyword>
<keyword id="KW-0479">Metal-binding</keyword>
<keyword id="KW-0521">NADP</keyword>
<keyword id="KW-0560">Oxidoreductase</keyword>
<keyword id="KW-0677">Repeat</keyword>